<proteinExistence type="inferred from homology"/>
<dbReference type="EMBL" id="DQ977487">
    <property type="protein sequence ID" value="ABM89270.1"/>
    <property type="molecule type" value="Genomic_DNA"/>
</dbReference>
<dbReference type="RefSeq" id="XP_054311974.1">
    <property type="nucleotide sequence ID" value="XM_054455999.2"/>
</dbReference>
<dbReference type="SMR" id="A2T7J2"/>
<dbReference type="GeneID" id="129016606"/>
<dbReference type="GO" id="GO:0005634">
    <property type="term" value="C:nucleus"/>
    <property type="evidence" value="ECO:0007669"/>
    <property type="project" value="UniProtKB-SubCell"/>
</dbReference>
<dbReference type="GO" id="GO:0000981">
    <property type="term" value="F:DNA-binding transcription factor activity, RNA polymerase II-specific"/>
    <property type="evidence" value="ECO:0007669"/>
    <property type="project" value="InterPro"/>
</dbReference>
<dbReference type="GO" id="GO:0000978">
    <property type="term" value="F:RNA polymerase II cis-regulatory region sequence-specific DNA binding"/>
    <property type="evidence" value="ECO:0007669"/>
    <property type="project" value="TreeGrafter"/>
</dbReference>
<dbReference type="CDD" id="cd00086">
    <property type="entry name" value="homeodomain"/>
    <property type="match status" value="1"/>
</dbReference>
<dbReference type="FunFam" id="1.10.10.60:FF:000113">
    <property type="entry name" value="homeobox protein Hox-B1"/>
    <property type="match status" value="1"/>
</dbReference>
<dbReference type="Gene3D" id="1.10.10.60">
    <property type="entry name" value="Homeodomain-like"/>
    <property type="match status" value="1"/>
</dbReference>
<dbReference type="InterPro" id="IPR001356">
    <property type="entry name" value="HD"/>
</dbReference>
<dbReference type="InterPro" id="IPR020479">
    <property type="entry name" value="HD_metazoa"/>
</dbReference>
<dbReference type="InterPro" id="IPR017970">
    <property type="entry name" value="Homeobox_CS"/>
</dbReference>
<dbReference type="InterPro" id="IPR009057">
    <property type="entry name" value="Homeodomain-like_sf"/>
</dbReference>
<dbReference type="InterPro" id="IPR046327">
    <property type="entry name" value="HXA1/B1/D1"/>
</dbReference>
<dbReference type="PANTHER" id="PTHR45946:SF5">
    <property type="entry name" value="HOMEOBOX PROTEIN HOX-B1"/>
    <property type="match status" value="1"/>
</dbReference>
<dbReference type="PANTHER" id="PTHR45946">
    <property type="entry name" value="HOMEOBOX PROTEIN ROUGH-RELATED"/>
    <property type="match status" value="1"/>
</dbReference>
<dbReference type="Pfam" id="PF00046">
    <property type="entry name" value="Homeodomain"/>
    <property type="match status" value="1"/>
</dbReference>
<dbReference type="PRINTS" id="PR00024">
    <property type="entry name" value="HOMEOBOX"/>
</dbReference>
<dbReference type="SMART" id="SM00389">
    <property type="entry name" value="HOX"/>
    <property type="match status" value="1"/>
</dbReference>
<dbReference type="SUPFAM" id="SSF46689">
    <property type="entry name" value="Homeodomain-like"/>
    <property type="match status" value="1"/>
</dbReference>
<dbReference type="PROSITE" id="PS00027">
    <property type="entry name" value="HOMEOBOX_1"/>
    <property type="match status" value="1"/>
</dbReference>
<dbReference type="PROSITE" id="PS50071">
    <property type="entry name" value="HOMEOBOX_2"/>
    <property type="match status" value="1"/>
</dbReference>
<comment type="function">
    <text evidence="1">Sequence-specific transcription factor which is part of a developmental regulatory system that provides cells with specific positional identities on the anterior-posterior axis. Acts on the anterior body structures (By similarity).</text>
</comment>
<comment type="subcellular location">
    <subcellularLocation>
        <location evidence="2">Nucleus</location>
    </subcellularLocation>
</comment>
<comment type="similarity">
    <text evidence="4">Belongs to the Antp homeobox family. Labial subfamily.</text>
</comment>
<evidence type="ECO:0000250" key="1"/>
<evidence type="ECO:0000255" key="2">
    <source>
        <dbReference type="PROSITE-ProRule" id="PRU00108"/>
    </source>
</evidence>
<evidence type="ECO:0000256" key="3">
    <source>
        <dbReference type="SAM" id="MobiDB-lite"/>
    </source>
</evidence>
<evidence type="ECO:0000305" key="4"/>
<feature type="chain" id="PRO_0000285427" description="Homeobox protein Hox-B1">
    <location>
        <begin position="1"/>
        <end position="301"/>
    </location>
</feature>
<feature type="DNA-binding region" description="Homeobox" evidence="2">
    <location>
        <begin position="203"/>
        <end position="262"/>
    </location>
</feature>
<feature type="region of interest" description="Disordered" evidence="3">
    <location>
        <begin position="20"/>
        <end position="77"/>
    </location>
</feature>
<feature type="region of interest" description="Disordered" evidence="3">
    <location>
        <begin position="127"/>
        <end position="149"/>
    </location>
</feature>
<feature type="region of interest" description="Disordered" evidence="3">
    <location>
        <begin position="255"/>
        <end position="301"/>
    </location>
</feature>
<feature type="short sequence motif" description="Antp-type hexapeptide">
    <location>
        <begin position="179"/>
        <end position="184"/>
    </location>
</feature>
<feature type="compositionally biased region" description="Polar residues" evidence="3">
    <location>
        <begin position="26"/>
        <end position="38"/>
    </location>
</feature>
<feature type="compositionally biased region" description="Polar residues" evidence="3">
    <location>
        <begin position="55"/>
        <end position="70"/>
    </location>
</feature>
<feature type="compositionally biased region" description="Polar residues" evidence="3">
    <location>
        <begin position="284"/>
        <end position="301"/>
    </location>
</feature>
<name>HXB1_PONPY</name>
<organism>
    <name type="scientific">Pongo pygmaeus</name>
    <name type="common">Bornean orangutan</name>
    <dbReference type="NCBI Taxonomy" id="9600"/>
    <lineage>
        <taxon>Eukaryota</taxon>
        <taxon>Metazoa</taxon>
        <taxon>Chordata</taxon>
        <taxon>Craniata</taxon>
        <taxon>Vertebrata</taxon>
        <taxon>Euteleostomi</taxon>
        <taxon>Mammalia</taxon>
        <taxon>Eutheria</taxon>
        <taxon>Euarchontoglires</taxon>
        <taxon>Primates</taxon>
        <taxon>Haplorrhini</taxon>
        <taxon>Catarrhini</taxon>
        <taxon>Hominidae</taxon>
        <taxon>Pongo</taxon>
    </lineage>
</organism>
<protein>
    <recommendedName>
        <fullName>Homeobox protein Hox-B1</fullName>
    </recommendedName>
</protein>
<reference key="1">
    <citation type="submission" date="2006-08" db="EMBL/GenBank/DDBJ databases">
        <title>Positive selection in transcription factor genes on the human lineage.</title>
        <authorList>
            <person name="Nickel G.C."/>
            <person name="Tefft D.L."/>
            <person name="Trevarthen K."/>
            <person name="Funt J."/>
            <person name="Adams M.D."/>
        </authorList>
    </citation>
    <scope>NUCLEOTIDE SEQUENCE [GENOMIC DNA]</scope>
</reference>
<keyword id="KW-0217">Developmental protein</keyword>
<keyword id="KW-0238">DNA-binding</keyword>
<keyword id="KW-0371">Homeobox</keyword>
<keyword id="KW-0539">Nucleus</keyword>
<keyword id="KW-0804">Transcription</keyword>
<keyword id="KW-0805">Transcription regulation</keyword>
<gene>
    <name type="primary">HOXB1</name>
</gene>
<accession>A2T7J2</accession>
<sequence length="301" mass="32138">MDYNRMNSFLEYPLCNRGPSAYSAHSAPTSFPPSSAQAVDSYASEGRYGGGLSSPAFQQNSGYPAQQQPSALGVPFPSSAPSGYAPAACSPSYGPSQYYPLGQSEGDGGYFHPSSYGAQLGGLSDGYGAGGAGPGPYPPQHPPYGNEQTASFAPAYADLLSEDKETPCPSEPNTPTARTFDWMKVKRNPPKTAKVSELGLGSPSGLRTNFTTRQLTELEKEFHFNKYLSRARRVEIAATLELNETQVKIWFQNRRMKQKKREREGGRVPPAPPGCPKEAAGDASDQSTCTSPEASPSSVTS</sequence>